<accession>Q6DPT5</accession>
<organism>
    <name type="scientific">Influenza A virus (strain A/Chicken/Hong Kong/YU22/2002 H5N1 genotype Z)</name>
    <dbReference type="NCBI Taxonomy" id="284177"/>
    <lineage>
        <taxon>Viruses</taxon>
        <taxon>Riboviria</taxon>
        <taxon>Orthornavirae</taxon>
        <taxon>Negarnaviricota</taxon>
        <taxon>Polyploviricotina</taxon>
        <taxon>Insthoviricetes</taxon>
        <taxon>Articulavirales</taxon>
        <taxon>Orthomyxoviridae</taxon>
        <taxon>Alphainfluenzavirus</taxon>
        <taxon>Alphainfluenzavirus influenzae</taxon>
        <taxon>Influenza A virus</taxon>
    </lineage>
</organism>
<sequence>MSLLTEVETPTRNEWECRCSDSSDPLVVAASIIGILHLILWILDRLFFKCIYRRLKYGLKRGPSTEGVPESMREEYRQEQQSAVDVDDGHFVNIELE</sequence>
<keyword id="KW-0025">Alternative splicing</keyword>
<keyword id="KW-1015">Disulfide bond</keyword>
<keyword id="KW-1032">Host cell membrane</keyword>
<keyword id="KW-1043">Host membrane</keyword>
<keyword id="KW-0945">Host-virus interaction</keyword>
<keyword id="KW-0375">Hydrogen ion transport</keyword>
<keyword id="KW-1083">Inhibition of host autophagy by virus</keyword>
<keyword id="KW-0407">Ion channel</keyword>
<keyword id="KW-0406">Ion transport</keyword>
<keyword id="KW-0449">Lipoprotein</keyword>
<keyword id="KW-0472">Membrane</keyword>
<keyword id="KW-0564">Palmitate</keyword>
<keyword id="KW-0597">Phosphoprotein</keyword>
<keyword id="KW-0735">Signal-anchor</keyword>
<keyword id="KW-0812">Transmembrane</keyword>
<keyword id="KW-1133">Transmembrane helix</keyword>
<keyword id="KW-0813">Transport</keyword>
<keyword id="KW-1182">Viral ion channel</keyword>
<keyword id="KW-0946">Virion</keyword>
<reference key="1">
    <citation type="journal article" date="2004" name="Nature">
        <title>Genesis of a highly pathogenic and potentially pandemic H5N1 influenza virus in eastern Asia.</title>
        <authorList>
            <person name="Li K.S."/>
            <person name="Guan Y."/>
            <person name="Wang J."/>
            <person name="Smith G.J.D."/>
            <person name="Xu K.M."/>
            <person name="Duan L."/>
            <person name="Rahardjo A.P."/>
            <person name="Puthavathana P."/>
            <person name="Buranathai C."/>
            <person name="Nguyen T.D."/>
            <person name="Estoepangestie A.T.S."/>
            <person name="Chaisingh A."/>
            <person name="Auewarakul P."/>
            <person name="Long H.T."/>
            <person name="Hanh N.T.H."/>
            <person name="Webby R.J."/>
            <person name="Poon L.L.M."/>
            <person name="Chen H."/>
            <person name="Shortridge K.F."/>
            <person name="Yuen K.Y."/>
            <person name="Webster R.G."/>
            <person name="Peiris J.S.M."/>
        </authorList>
    </citation>
    <scope>NUCLEOTIDE SEQUENCE [GENOMIC RNA]</scope>
</reference>
<name>M2_I02A6</name>
<evidence type="ECO:0000255" key="1">
    <source>
        <dbReference type="HAMAP-Rule" id="MF_04069"/>
    </source>
</evidence>
<evidence type="ECO:0000256" key="2">
    <source>
        <dbReference type="SAM" id="MobiDB-lite"/>
    </source>
</evidence>
<comment type="function">
    <text evidence="1">Forms a proton-selective ion channel that is necessary for the efficient release of the viral genome during virus entry. After attaching to the cell surface, the virion enters the cell by endocytosis. Acidification of the endosome triggers M2 ion channel activity. The influx of protons into virion interior is believed to disrupt interactions between the viral ribonucleoprotein (RNP), matrix protein 1 (M1), and lipid bilayers, thereby freeing the viral genome from interaction with viral proteins and enabling RNA segments to migrate to the host cell nucleus, where influenza virus RNA transcription and replication occur. Also plays a role in viral proteins secretory pathway. Elevates the intravesicular pH of normally acidic compartments, such as trans-Golgi network, preventing newly formed hemagglutinin from premature switching to the fusion-active conformation.</text>
</comment>
<comment type="activity regulation">
    <text>The M2 protein from most influenza A strains is inhibited by amantadine and rimantadine, resulting in viral uncoating incapacity. Emergence of amantadine-resistant variants is usually rapid.</text>
</comment>
<comment type="subunit">
    <text evidence="1">Homotetramer; composed of two disulfide-linked dimers held together by non-covalent interactions. May interact with matrix protein 1.</text>
</comment>
<comment type="subcellular location">
    <subcellularLocation>
        <location evidence="1">Virion membrane</location>
    </subcellularLocation>
    <subcellularLocation>
        <location evidence="1">Host apical cell membrane</location>
        <topology evidence="1">Single-pass type III membrane protein</topology>
    </subcellularLocation>
    <text evidence="1">Abundantly expressed at the apical plasma membrane in infected polarized epithelial cells, in close proximity to budding and assembled virions. Minor component of virions (only 16-20 molecules/virion).</text>
</comment>
<comment type="alternative products">
    <event type="alternative splicing"/>
    <isoform>
        <id>Q6DPT5-1</id>
        <name>M2</name>
        <sequence type="displayed"/>
    </isoform>
    <isoform>
        <id>Q6DPT4-1</id>
        <name>M1</name>
        <sequence type="external"/>
    </isoform>
    <text>Only the first 9 residues are shared by the 2 isoforms.</text>
</comment>
<comment type="domain">
    <text evidence="1">Cytoplasmic tail plays an important role in virion assembly and morphogenesis.</text>
</comment>
<comment type="miscellaneous">
    <text evidence="1">When the channel is activated, one or more imidazole moieties of His-37 probably become bi-protonated.</text>
</comment>
<comment type="similarity">
    <text evidence="1">Belongs to the influenza viruses matrix protein M2 family.</text>
</comment>
<feature type="chain" id="PRO_0000311631" description="Matrix protein 2">
    <location>
        <begin position="1"/>
        <end position="97"/>
    </location>
</feature>
<feature type="topological domain" description="Virion surface" evidence="1">
    <location>
        <begin position="1"/>
        <end position="22"/>
    </location>
</feature>
<feature type="transmembrane region" description="Helical; Signal-anchor for type III membrane protein" evidence="1">
    <location>
        <begin position="23"/>
        <end position="43"/>
    </location>
</feature>
<feature type="topological domain" description="Intravirion" evidence="1">
    <location>
        <begin position="44"/>
        <end position="97"/>
    </location>
</feature>
<feature type="region of interest" description="Disordered" evidence="2">
    <location>
        <begin position="60"/>
        <end position="83"/>
    </location>
</feature>
<feature type="site" description="Essential for channel activity, possibly by being protonated during channel activation, and by forming the channel gate and the selective filter" evidence="1">
    <location>
        <position position="37"/>
    </location>
</feature>
<feature type="site" description="Seems to be involved in pH gating" evidence="1">
    <location>
        <position position="41"/>
    </location>
</feature>
<feature type="modified residue" description="Phosphoserine; by host" evidence="1">
    <location>
        <position position="64"/>
    </location>
</feature>
<feature type="modified residue" description="Phosphoserine; by host" evidence="1">
    <location>
        <position position="82"/>
    </location>
</feature>
<feature type="lipid moiety-binding region" description="S-palmitoyl cysteine; by host" evidence="1">
    <location>
        <position position="50"/>
    </location>
</feature>
<feature type="disulfide bond" description="Interchain (with C-17)" evidence="1">
    <location>
        <position position="17"/>
    </location>
</feature>
<feature type="disulfide bond" description="Interchain (with C-19)" evidence="1">
    <location>
        <position position="19"/>
    </location>
</feature>
<dbReference type="EMBL" id="AY651403">
    <property type="protein sequence ID" value="AAT70558.1"/>
    <property type="molecule type" value="Genomic_RNA"/>
</dbReference>
<dbReference type="SMR" id="Q6DPT5"/>
<dbReference type="GO" id="GO:0020002">
    <property type="term" value="C:host cell plasma membrane"/>
    <property type="evidence" value="ECO:0007669"/>
    <property type="project" value="UniProtKB-SubCell"/>
</dbReference>
<dbReference type="GO" id="GO:0016020">
    <property type="term" value="C:membrane"/>
    <property type="evidence" value="ECO:0007669"/>
    <property type="project" value="UniProtKB-UniRule"/>
</dbReference>
<dbReference type="GO" id="GO:0055036">
    <property type="term" value="C:virion membrane"/>
    <property type="evidence" value="ECO:0007669"/>
    <property type="project" value="UniProtKB-SubCell"/>
</dbReference>
<dbReference type="GO" id="GO:0005216">
    <property type="term" value="F:monoatomic ion channel activity"/>
    <property type="evidence" value="ECO:0007669"/>
    <property type="project" value="UniProtKB-UniRule"/>
</dbReference>
<dbReference type="GO" id="GO:0015078">
    <property type="term" value="F:proton transmembrane transporter activity"/>
    <property type="evidence" value="ECO:0007669"/>
    <property type="project" value="UniProtKB-UniRule"/>
</dbReference>
<dbReference type="GO" id="GO:0051259">
    <property type="term" value="P:protein complex oligomerization"/>
    <property type="evidence" value="ECO:0007669"/>
    <property type="project" value="UniProtKB-UniRule"/>
</dbReference>
<dbReference type="GO" id="GO:0044694">
    <property type="term" value="P:symbiont genome entry into host cell via pore formation in plasma membrane"/>
    <property type="evidence" value="ECO:0007669"/>
    <property type="project" value="UniProtKB-UniRule"/>
</dbReference>
<dbReference type="GO" id="GO:0140321">
    <property type="term" value="P:symbiont-mediated suppression of host autophagy"/>
    <property type="evidence" value="ECO:0007669"/>
    <property type="project" value="UniProtKB-KW"/>
</dbReference>
<dbReference type="Gene3D" id="6.10.250.1640">
    <property type="match status" value="1"/>
</dbReference>
<dbReference type="HAMAP" id="MF_04069">
    <property type="entry name" value="INFV_M2"/>
    <property type="match status" value="1"/>
</dbReference>
<dbReference type="InterPro" id="IPR002089">
    <property type="entry name" value="Flu_M2"/>
</dbReference>
<dbReference type="Pfam" id="PF00599">
    <property type="entry name" value="Flu_M2"/>
    <property type="match status" value="1"/>
</dbReference>
<gene>
    <name evidence="1" type="primary">M</name>
</gene>
<organismHost>
    <name type="scientific">Aves</name>
    <dbReference type="NCBI Taxonomy" id="8782"/>
</organismHost>
<organismHost>
    <name type="scientific">Felis catus</name>
    <name type="common">Cat</name>
    <name type="synonym">Felis silvestris catus</name>
    <dbReference type="NCBI Taxonomy" id="9685"/>
</organismHost>
<organismHost>
    <name type="scientific">Homo sapiens</name>
    <name type="common">Human</name>
    <dbReference type="NCBI Taxonomy" id="9606"/>
</organismHost>
<organismHost>
    <name type="scientific">Panthera pardus</name>
    <name type="common">Leopard</name>
    <name type="synonym">Felis pardus</name>
    <dbReference type="NCBI Taxonomy" id="9691"/>
</organismHost>
<organismHost>
    <name type="scientific">Panthera tigris</name>
    <name type="common">Tiger</name>
    <dbReference type="NCBI Taxonomy" id="9694"/>
</organismHost>
<organismHost>
    <name type="scientific">Sus scrofa</name>
    <name type="common">Pig</name>
    <dbReference type="NCBI Taxonomy" id="9823"/>
</organismHost>
<proteinExistence type="inferred from homology"/>
<protein>
    <recommendedName>
        <fullName evidence="1">Matrix protein 2</fullName>
    </recommendedName>
    <alternativeName>
        <fullName evidence="1">Proton channel protein M2</fullName>
    </alternativeName>
</protein>